<proteinExistence type="inferred from homology"/>
<organism>
    <name type="scientific">Escherichia coli O6:K15:H31 (strain 536 / UPEC)</name>
    <dbReference type="NCBI Taxonomy" id="362663"/>
    <lineage>
        <taxon>Bacteria</taxon>
        <taxon>Pseudomonadati</taxon>
        <taxon>Pseudomonadota</taxon>
        <taxon>Gammaproteobacteria</taxon>
        <taxon>Enterobacterales</taxon>
        <taxon>Enterobacteriaceae</taxon>
        <taxon>Escherichia</taxon>
    </lineage>
</organism>
<protein>
    <recommendedName>
        <fullName evidence="1">UPF0756 membrane protein YeaL</fullName>
    </recommendedName>
</protein>
<accession>Q0TH40</accession>
<dbReference type="EMBL" id="CP000247">
    <property type="protein sequence ID" value="ABG69739.1"/>
    <property type="molecule type" value="Genomic_DNA"/>
</dbReference>
<dbReference type="RefSeq" id="WP_000460707.1">
    <property type="nucleotide sequence ID" value="NC_008253.1"/>
</dbReference>
<dbReference type="KEGG" id="ecp:ECP_1736"/>
<dbReference type="HOGENOM" id="CLU_125889_0_0_6"/>
<dbReference type="Proteomes" id="UP000009182">
    <property type="component" value="Chromosome"/>
</dbReference>
<dbReference type="GO" id="GO:0005886">
    <property type="term" value="C:plasma membrane"/>
    <property type="evidence" value="ECO:0007669"/>
    <property type="project" value="UniProtKB-SubCell"/>
</dbReference>
<dbReference type="HAMAP" id="MF_01874">
    <property type="entry name" value="UPF0756"/>
    <property type="match status" value="1"/>
</dbReference>
<dbReference type="InterPro" id="IPR007382">
    <property type="entry name" value="UPF0756_TM"/>
</dbReference>
<dbReference type="PANTHER" id="PTHR38452">
    <property type="entry name" value="UPF0756 MEMBRANE PROTEIN YEAL"/>
    <property type="match status" value="1"/>
</dbReference>
<dbReference type="PANTHER" id="PTHR38452:SF1">
    <property type="entry name" value="UPF0756 MEMBRANE PROTEIN YEAL"/>
    <property type="match status" value="1"/>
</dbReference>
<dbReference type="Pfam" id="PF04284">
    <property type="entry name" value="DUF441"/>
    <property type="match status" value="1"/>
</dbReference>
<comment type="subcellular location">
    <subcellularLocation>
        <location evidence="1">Cell membrane</location>
        <topology evidence="1">Multi-pass membrane protein</topology>
    </subcellularLocation>
</comment>
<comment type="similarity">
    <text evidence="1">Belongs to the UPF0756 family.</text>
</comment>
<keyword id="KW-1003">Cell membrane</keyword>
<keyword id="KW-0472">Membrane</keyword>
<keyword id="KW-0812">Transmembrane</keyword>
<keyword id="KW-1133">Transmembrane helix</keyword>
<gene>
    <name evidence="1" type="primary">yeaL</name>
    <name type="ordered locus">ECP_1736</name>
</gene>
<sequence length="148" mass="15256">MFDVTLLILLGLAALGFISHNTTVAVSILVLIIVRVTPLSTFFPWIEKQGLSIGIIILTIGVMAPIASGTLPPSTLIHSFLNWKSLVAIAVGVIVSWLGGRGVTLMGSQPQLVAGLLVGTVLGVALFRGVPVGPLIAAGLVSLIVGKQ</sequence>
<reference key="1">
    <citation type="journal article" date="2006" name="Mol. Microbiol.">
        <title>Role of pathogenicity island-associated integrases in the genome plasticity of uropathogenic Escherichia coli strain 536.</title>
        <authorList>
            <person name="Hochhut B."/>
            <person name="Wilde C."/>
            <person name="Balling G."/>
            <person name="Middendorf B."/>
            <person name="Dobrindt U."/>
            <person name="Brzuszkiewicz E."/>
            <person name="Gottschalk G."/>
            <person name="Carniel E."/>
            <person name="Hacker J."/>
        </authorList>
    </citation>
    <scope>NUCLEOTIDE SEQUENCE [LARGE SCALE GENOMIC DNA]</scope>
    <source>
        <strain>536 / UPEC</strain>
    </source>
</reference>
<evidence type="ECO:0000255" key="1">
    <source>
        <dbReference type="HAMAP-Rule" id="MF_01874"/>
    </source>
</evidence>
<feature type="chain" id="PRO_0000388869" description="UPF0756 membrane protein YeaL">
    <location>
        <begin position="1"/>
        <end position="148"/>
    </location>
</feature>
<feature type="transmembrane region" description="Helical" evidence="1">
    <location>
        <begin position="14"/>
        <end position="34"/>
    </location>
</feature>
<feature type="transmembrane region" description="Helical" evidence="1">
    <location>
        <begin position="51"/>
        <end position="71"/>
    </location>
</feature>
<feature type="transmembrane region" description="Helical" evidence="1">
    <location>
        <begin position="86"/>
        <end position="106"/>
    </location>
</feature>
<feature type="transmembrane region" description="Helical" evidence="1">
    <location>
        <begin position="121"/>
        <end position="141"/>
    </location>
</feature>
<name>YEAL_ECOL5</name>